<dbReference type="EMBL" id="CP000716">
    <property type="protein sequence ID" value="ABR30821.1"/>
    <property type="molecule type" value="Genomic_DNA"/>
</dbReference>
<dbReference type="RefSeq" id="WP_012057182.1">
    <property type="nucleotide sequence ID" value="NC_009616.1"/>
</dbReference>
<dbReference type="SMR" id="A6LLM0"/>
<dbReference type="STRING" id="391009.Tmel_0960"/>
<dbReference type="KEGG" id="tme:Tmel_0960"/>
<dbReference type="eggNOG" id="COG0197">
    <property type="taxonomic scope" value="Bacteria"/>
</dbReference>
<dbReference type="HOGENOM" id="CLU_078858_2_1_0"/>
<dbReference type="OrthoDB" id="9802589at2"/>
<dbReference type="Proteomes" id="UP000001110">
    <property type="component" value="Chromosome"/>
</dbReference>
<dbReference type="GO" id="GO:0022625">
    <property type="term" value="C:cytosolic large ribosomal subunit"/>
    <property type="evidence" value="ECO:0007669"/>
    <property type="project" value="TreeGrafter"/>
</dbReference>
<dbReference type="GO" id="GO:0019843">
    <property type="term" value="F:rRNA binding"/>
    <property type="evidence" value="ECO:0007669"/>
    <property type="project" value="UniProtKB-UniRule"/>
</dbReference>
<dbReference type="GO" id="GO:0003735">
    <property type="term" value="F:structural constituent of ribosome"/>
    <property type="evidence" value="ECO:0007669"/>
    <property type="project" value="InterPro"/>
</dbReference>
<dbReference type="GO" id="GO:0000049">
    <property type="term" value="F:tRNA binding"/>
    <property type="evidence" value="ECO:0007669"/>
    <property type="project" value="UniProtKB-KW"/>
</dbReference>
<dbReference type="GO" id="GO:0006412">
    <property type="term" value="P:translation"/>
    <property type="evidence" value="ECO:0007669"/>
    <property type="project" value="UniProtKB-UniRule"/>
</dbReference>
<dbReference type="CDD" id="cd01433">
    <property type="entry name" value="Ribosomal_L16_L10e"/>
    <property type="match status" value="1"/>
</dbReference>
<dbReference type="FunFam" id="3.90.1170.10:FF:000001">
    <property type="entry name" value="50S ribosomal protein L16"/>
    <property type="match status" value="1"/>
</dbReference>
<dbReference type="Gene3D" id="3.90.1170.10">
    <property type="entry name" value="Ribosomal protein L10e/L16"/>
    <property type="match status" value="1"/>
</dbReference>
<dbReference type="HAMAP" id="MF_01342">
    <property type="entry name" value="Ribosomal_uL16"/>
    <property type="match status" value="1"/>
</dbReference>
<dbReference type="InterPro" id="IPR047873">
    <property type="entry name" value="Ribosomal_uL16"/>
</dbReference>
<dbReference type="InterPro" id="IPR000114">
    <property type="entry name" value="Ribosomal_uL16_bact-type"/>
</dbReference>
<dbReference type="InterPro" id="IPR020798">
    <property type="entry name" value="Ribosomal_uL16_CS"/>
</dbReference>
<dbReference type="InterPro" id="IPR016180">
    <property type="entry name" value="Ribosomal_uL16_dom"/>
</dbReference>
<dbReference type="InterPro" id="IPR036920">
    <property type="entry name" value="Ribosomal_uL16_sf"/>
</dbReference>
<dbReference type="NCBIfam" id="TIGR01164">
    <property type="entry name" value="rplP_bact"/>
    <property type="match status" value="1"/>
</dbReference>
<dbReference type="PANTHER" id="PTHR12220">
    <property type="entry name" value="50S/60S RIBOSOMAL PROTEIN L16"/>
    <property type="match status" value="1"/>
</dbReference>
<dbReference type="PANTHER" id="PTHR12220:SF13">
    <property type="entry name" value="LARGE RIBOSOMAL SUBUNIT PROTEIN UL16M"/>
    <property type="match status" value="1"/>
</dbReference>
<dbReference type="Pfam" id="PF00252">
    <property type="entry name" value="Ribosomal_L16"/>
    <property type="match status" value="1"/>
</dbReference>
<dbReference type="PRINTS" id="PR00060">
    <property type="entry name" value="RIBOSOMALL16"/>
</dbReference>
<dbReference type="SUPFAM" id="SSF54686">
    <property type="entry name" value="Ribosomal protein L16p/L10e"/>
    <property type="match status" value="1"/>
</dbReference>
<dbReference type="PROSITE" id="PS00586">
    <property type="entry name" value="RIBOSOMAL_L16_1"/>
    <property type="match status" value="1"/>
</dbReference>
<feature type="chain" id="PRO_1000054726" description="Large ribosomal subunit protein uL16">
    <location>
        <begin position="1"/>
        <end position="142"/>
    </location>
</feature>
<gene>
    <name evidence="1" type="primary">rplP</name>
    <name type="ordered locus">Tmel_0960</name>
</gene>
<comment type="function">
    <text evidence="1">Binds 23S rRNA and is also seen to make contacts with the A and possibly P site tRNAs.</text>
</comment>
<comment type="subunit">
    <text evidence="1">Part of the 50S ribosomal subunit.</text>
</comment>
<comment type="similarity">
    <text evidence="1">Belongs to the universal ribosomal protein uL16 family.</text>
</comment>
<protein>
    <recommendedName>
        <fullName evidence="1">Large ribosomal subunit protein uL16</fullName>
    </recommendedName>
    <alternativeName>
        <fullName evidence="2">50S ribosomal protein L16</fullName>
    </alternativeName>
</protein>
<keyword id="KW-0687">Ribonucleoprotein</keyword>
<keyword id="KW-0689">Ribosomal protein</keyword>
<keyword id="KW-0694">RNA-binding</keyword>
<keyword id="KW-0699">rRNA-binding</keyword>
<keyword id="KW-0820">tRNA-binding</keyword>
<reference key="1">
    <citation type="submission" date="2007-05" db="EMBL/GenBank/DDBJ databases">
        <title>Complete sequence of Thermosipho melanesiensis BI429.</title>
        <authorList>
            <consortium name="US DOE Joint Genome Institute"/>
            <person name="Copeland A."/>
            <person name="Lucas S."/>
            <person name="Lapidus A."/>
            <person name="Barry K."/>
            <person name="Glavina del Rio T."/>
            <person name="Dalin E."/>
            <person name="Tice H."/>
            <person name="Pitluck S."/>
            <person name="Chertkov O."/>
            <person name="Brettin T."/>
            <person name="Bruce D."/>
            <person name="Detter J.C."/>
            <person name="Han C."/>
            <person name="Schmutz J."/>
            <person name="Larimer F."/>
            <person name="Land M."/>
            <person name="Hauser L."/>
            <person name="Kyrpides N."/>
            <person name="Mikhailova N."/>
            <person name="Nelson K."/>
            <person name="Gogarten J.P."/>
            <person name="Noll K."/>
            <person name="Richardson P."/>
        </authorList>
    </citation>
    <scope>NUCLEOTIDE SEQUENCE [LARGE SCALE GENOMIC DNA]</scope>
    <source>
        <strain>DSM 12029 / CIP 104789 / BI429</strain>
    </source>
</reference>
<accession>A6LLM0</accession>
<name>RL16_THEM4</name>
<sequence length="142" mass="15840">MLMPKRVKYRKQHRGRMKGKAKGGSLVAFGDYGLKALEAHWITAQQIEACRIAITRTLKKSGKLWIRIFPDKSYTKHPAESKLGKGKGNVEGWVAVVKPGRVMFEIGGVSEELAREALEYAATKLPIRTKIVKRHEIGGEAV</sequence>
<organism>
    <name type="scientific">Thermosipho melanesiensis (strain DSM 12029 / CIP 104789 / BI429)</name>
    <dbReference type="NCBI Taxonomy" id="391009"/>
    <lineage>
        <taxon>Bacteria</taxon>
        <taxon>Thermotogati</taxon>
        <taxon>Thermotogota</taxon>
        <taxon>Thermotogae</taxon>
        <taxon>Thermotogales</taxon>
        <taxon>Fervidobacteriaceae</taxon>
        <taxon>Thermosipho</taxon>
    </lineage>
</organism>
<evidence type="ECO:0000255" key="1">
    <source>
        <dbReference type="HAMAP-Rule" id="MF_01342"/>
    </source>
</evidence>
<evidence type="ECO:0000305" key="2"/>
<proteinExistence type="inferred from homology"/>